<keyword id="KW-0067">ATP-binding</keyword>
<keyword id="KW-0963">Cytoplasm</keyword>
<keyword id="KW-0418">Kinase</keyword>
<keyword id="KW-0545">Nucleotide biosynthesis</keyword>
<keyword id="KW-0547">Nucleotide-binding</keyword>
<keyword id="KW-1185">Reference proteome</keyword>
<keyword id="KW-0808">Transferase</keyword>
<evidence type="ECO:0000255" key="1">
    <source>
        <dbReference type="HAMAP-Rule" id="MF_00235"/>
    </source>
</evidence>
<protein>
    <recommendedName>
        <fullName evidence="1">Adenylate kinase</fullName>
        <shortName evidence="1">AK</shortName>
        <ecNumber evidence="1">2.7.4.3</ecNumber>
    </recommendedName>
    <alternativeName>
        <fullName evidence="1">ATP-AMP transphosphorylase</fullName>
    </alternativeName>
    <alternativeName>
        <fullName evidence="1">ATP:AMP phosphotransferase</fullName>
    </alternativeName>
    <alternativeName>
        <fullName evidence="1">Adenylate monophosphate kinase</fullName>
    </alternativeName>
</protein>
<accession>B2HCV5</accession>
<feature type="chain" id="PRO_1000100586" description="Adenylate kinase">
    <location>
        <begin position="1"/>
        <end position="181"/>
    </location>
</feature>
<feature type="region of interest" description="NMP" evidence="1">
    <location>
        <begin position="30"/>
        <end position="59"/>
    </location>
</feature>
<feature type="region of interest" description="LID" evidence="1">
    <location>
        <begin position="126"/>
        <end position="132"/>
    </location>
</feature>
<feature type="binding site" evidence="1">
    <location>
        <begin position="10"/>
        <end position="15"/>
    </location>
    <ligand>
        <name>ATP</name>
        <dbReference type="ChEBI" id="CHEBI:30616"/>
    </ligand>
</feature>
<feature type="binding site" evidence="1">
    <location>
        <position position="31"/>
    </location>
    <ligand>
        <name>AMP</name>
        <dbReference type="ChEBI" id="CHEBI:456215"/>
    </ligand>
</feature>
<feature type="binding site" evidence="1">
    <location>
        <position position="36"/>
    </location>
    <ligand>
        <name>AMP</name>
        <dbReference type="ChEBI" id="CHEBI:456215"/>
    </ligand>
</feature>
<feature type="binding site" evidence="1">
    <location>
        <begin position="57"/>
        <end position="59"/>
    </location>
    <ligand>
        <name>AMP</name>
        <dbReference type="ChEBI" id="CHEBI:456215"/>
    </ligand>
</feature>
<feature type="binding site" evidence="1">
    <location>
        <begin position="85"/>
        <end position="88"/>
    </location>
    <ligand>
        <name>AMP</name>
        <dbReference type="ChEBI" id="CHEBI:456215"/>
    </ligand>
</feature>
<feature type="binding site" evidence="1">
    <location>
        <position position="92"/>
    </location>
    <ligand>
        <name>AMP</name>
        <dbReference type="ChEBI" id="CHEBI:456215"/>
    </ligand>
</feature>
<feature type="binding site" evidence="1">
    <location>
        <position position="127"/>
    </location>
    <ligand>
        <name>ATP</name>
        <dbReference type="ChEBI" id="CHEBI:30616"/>
    </ligand>
</feature>
<feature type="binding site" evidence="1">
    <location>
        <position position="129"/>
    </location>
    <ligand>
        <name>AMP</name>
        <dbReference type="ChEBI" id="CHEBI:456215"/>
    </ligand>
</feature>
<feature type="binding site" evidence="1">
    <location>
        <position position="140"/>
    </location>
    <ligand>
        <name>AMP</name>
        <dbReference type="ChEBI" id="CHEBI:456215"/>
    </ligand>
</feature>
<feature type="binding site" evidence="1">
    <location>
        <position position="166"/>
    </location>
    <ligand>
        <name>ATP</name>
        <dbReference type="ChEBI" id="CHEBI:30616"/>
    </ligand>
</feature>
<organism>
    <name type="scientific">Mycobacterium marinum (strain ATCC BAA-535 / M)</name>
    <dbReference type="NCBI Taxonomy" id="216594"/>
    <lineage>
        <taxon>Bacteria</taxon>
        <taxon>Bacillati</taxon>
        <taxon>Actinomycetota</taxon>
        <taxon>Actinomycetes</taxon>
        <taxon>Mycobacteriales</taxon>
        <taxon>Mycobacteriaceae</taxon>
        <taxon>Mycobacterium</taxon>
        <taxon>Mycobacterium ulcerans group</taxon>
    </lineage>
</organism>
<comment type="function">
    <text evidence="1">Catalyzes the reversible transfer of the terminal phosphate group between ATP and AMP. Plays an important role in cellular energy homeostasis and in adenine nucleotide metabolism.</text>
</comment>
<comment type="catalytic activity">
    <reaction evidence="1">
        <text>AMP + ATP = 2 ADP</text>
        <dbReference type="Rhea" id="RHEA:12973"/>
        <dbReference type="ChEBI" id="CHEBI:30616"/>
        <dbReference type="ChEBI" id="CHEBI:456215"/>
        <dbReference type="ChEBI" id="CHEBI:456216"/>
        <dbReference type="EC" id="2.7.4.3"/>
    </reaction>
</comment>
<comment type="pathway">
    <text evidence="1">Purine metabolism; AMP biosynthesis via salvage pathway; AMP from ADP: step 1/1.</text>
</comment>
<comment type="subunit">
    <text evidence="1">Monomer.</text>
</comment>
<comment type="subcellular location">
    <subcellularLocation>
        <location evidence="1">Cytoplasm</location>
    </subcellularLocation>
</comment>
<comment type="domain">
    <text evidence="1">Consists of three domains, a large central CORE domain and two small peripheral domains, NMPbind and LID, which undergo movements during catalysis. The LID domain closes over the site of phosphoryl transfer upon ATP binding. Assembling and dissambling the active center during each catalytic cycle provides an effective means to prevent ATP hydrolysis.</text>
</comment>
<comment type="similarity">
    <text evidence="1">Belongs to the adenylate kinase family.</text>
</comment>
<proteinExistence type="inferred from homology"/>
<gene>
    <name evidence="1" type="primary">adk</name>
    <name type="ordered locus">MMAR_1071</name>
</gene>
<name>KAD_MYCMM</name>
<dbReference type="EC" id="2.7.4.3" evidence="1"/>
<dbReference type="EMBL" id="CP000854">
    <property type="protein sequence ID" value="ACC39527.1"/>
    <property type="molecule type" value="Genomic_DNA"/>
</dbReference>
<dbReference type="RefSeq" id="WP_012392965.1">
    <property type="nucleotide sequence ID" value="NC_010612.1"/>
</dbReference>
<dbReference type="SMR" id="B2HCV5"/>
<dbReference type="STRING" id="216594.MMAR_1071"/>
<dbReference type="KEGG" id="mmi:MMAR_1071"/>
<dbReference type="eggNOG" id="COG0563">
    <property type="taxonomic scope" value="Bacteria"/>
</dbReference>
<dbReference type="HOGENOM" id="CLU_032354_4_1_11"/>
<dbReference type="OrthoDB" id="9805030at2"/>
<dbReference type="UniPathway" id="UPA00588">
    <property type="reaction ID" value="UER00649"/>
</dbReference>
<dbReference type="Proteomes" id="UP000001190">
    <property type="component" value="Chromosome"/>
</dbReference>
<dbReference type="GO" id="GO:0005737">
    <property type="term" value="C:cytoplasm"/>
    <property type="evidence" value="ECO:0007669"/>
    <property type="project" value="UniProtKB-SubCell"/>
</dbReference>
<dbReference type="GO" id="GO:0004017">
    <property type="term" value="F:adenylate kinase activity"/>
    <property type="evidence" value="ECO:0007669"/>
    <property type="project" value="UniProtKB-UniRule"/>
</dbReference>
<dbReference type="GO" id="GO:0005524">
    <property type="term" value="F:ATP binding"/>
    <property type="evidence" value="ECO:0007669"/>
    <property type="project" value="UniProtKB-UniRule"/>
</dbReference>
<dbReference type="GO" id="GO:0044209">
    <property type="term" value="P:AMP salvage"/>
    <property type="evidence" value="ECO:0007669"/>
    <property type="project" value="UniProtKB-UniRule"/>
</dbReference>
<dbReference type="CDD" id="cd01428">
    <property type="entry name" value="ADK"/>
    <property type="match status" value="1"/>
</dbReference>
<dbReference type="Gene3D" id="3.40.50.300">
    <property type="entry name" value="P-loop containing nucleotide triphosphate hydrolases"/>
    <property type="match status" value="1"/>
</dbReference>
<dbReference type="HAMAP" id="MF_00235">
    <property type="entry name" value="Adenylate_kinase_Adk"/>
    <property type="match status" value="1"/>
</dbReference>
<dbReference type="InterPro" id="IPR000850">
    <property type="entry name" value="Adenylat/UMP-CMP_kin"/>
</dbReference>
<dbReference type="InterPro" id="IPR033690">
    <property type="entry name" value="Adenylat_kinase_CS"/>
</dbReference>
<dbReference type="InterPro" id="IPR027417">
    <property type="entry name" value="P-loop_NTPase"/>
</dbReference>
<dbReference type="NCBIfam" id="NF001381">
    <property type="entry name" value="PRK00279.1-3"/>
    <property type="match status" value="1"/>
</dbReference>
<dbReference type="NCBIfam" id="NF011100">
    <property type="entry name" value="PRK14527.1"/>
    <property type="match status" value="1"/>
</dbReference>
<dbReference type="NCBIfam" id="NF011105">
    <property type="entry name" value="PRK14532.1"/>
    <property type="match status" value="1"/>
</dbReference>
<dbReference type="PANTHER" id="PTHR23359">
    <property type="entry name" value="NUCLEOTIDE KINASE"/>
    <property type="match status" value="1"/>
</dbReference>
<dbReference type="Pfam" id="PF00406">
    <property type="entry name" value="ADK"/>
    <property type="match status" value="1"/>
</dbReference>
<dbReference type="PRINTS" id="PR00094">
    <property type="entry name" value="ADENYLTKNASE"/>
</dbReference>
<dbReference type="SUPFAM" id="SSF52540">
    <property type="entry name" value="P-loop containing nucleoside triphosphate hydrolases"/>
    <property type="match status" value="1"/>
</dbReference>
<dbReference type="PROSITE" id="PS00113">
    <property type="entry name" value="ADENYLATE_KINASE"/>
    <property type="match status" value="1"/>
</dbReference>
<sequence length="181" mass="20109">MRVVLLGPPGAGKGTQAQKLAEKLGIPQISTGELFRKNIQDGTKLGIEAKRYLDAGDLVPSDLTNQLVDDRLDQPDTAAGFILDGYPRSVEQAKALHEMLRRRDTDIDAVLEFRVSQDELLQRLKGRGRADDTDEVILNRMKVYRDETAPLLEFYDTEVKTVDAIGTLDEVFARALQALGK</sequence>
<reference key="1">
    <citation type="journal article" date="2008" name="Genome Res.">
        <title>Insights from the complete genome sequence of Mycobacterium marinum on the evolution of Mycobacterium tuberculosis.</title>
        <authorList>
            <person name="Stinear T.P."/>
            <person name="Seemann T."/>
            <person name="Harrison P.F."/>
            <person name="Jenkin G.A."/>
            <person name="Davies J.K."/>
            <person name="Johnson P.D."/>
            <person name="Abdellah Z."/>
            <person name="Arrowsmith C."/>
            <person name="Chillingworth T."/>
            <person name="Churcher C."/>
            <person name="Clarke K."/>
            <person name="Cronin A."/>
            <person name="Davis P."/>
            <person name="Goodhead I."/>
            <person name="Holroyd N."/>
            <person name="Jagels K."/>
            <person name="Lord A."/>
            <person name="Moule S."/>
            <person name="Mungall K."/>
            <person name="Norbertczak H."/>
            <person name="Quail M.A."/>
            <person name="Rabbinowitsch E."/>
            <person name="Walker D."/>
            <person name="White B."/>
            <person name="Whitehead S."/>
            <person name="Small P.L."/>
            <person name="Brosch R."/>
            <person name="Ramakrishnan L."/>
            <person name="Fischbach M.A."/>
            <person name="Parkhill J."/>
            <person name="Cole S.T."/>
        </authorList>
    </citation>
    <scope>NUCLEOTIDE SEQUENCE [LARGE SCALE GENOMIC DNA]</scope>
    <source>
        <strain>ATCC BAA-535 / M</strain>
    </source>
</reference>